<gene>
    <name type="primary">Slc4a3</name>
    <name type="synonym">Ae3</name>
</gene>
<feature type="chain" id="PRO_0000079220" description="Anion exchange protein 3">
    <location>
        <begin position="1"/>
        <end position="1227"/>
    </location>
</feature>
<feature type="topological domain" description="Cytoplasmic">
    <location>
        <begin position="1"/>
        <end position="707"/>
    </location>
</feature>
<feature type="transmembrane region" description="Helical" evidence="4">
    <location>
        <begin position="708"/>
        <end position="730"/>
    </location>
</feature>
<feature type="transmembrane region" description="Helical" evidence="4">
    <location>
        <begin position="736"/>
        <end position="773"/>
    </location>
</feature>
<feature type="transmembrane region" description="Helical" evidence="4">
    <location>
        <begin position="793"/>
        <end position="815"/>
    </location>
</feature>
<feature type="transmembrane region" description="Helical" evidence="4">
    <location>
        <begin position="825"/>
        <end position="846"/>
    </location>
</feature>
<feature type="transmembrane region" description="Helical" evidence="4">
    <location>
        <begin position="888"/>
        <end position="905"/>
    </location>
</feature>
<feature type="topological domain" description="Cytoplasmic" evidence="4">
    <location>
        <begin position="906"/>
        <end position="920"/>
    </location>
</feature>
<feature type="transmembrane region" description="Helical" evidence="4">
    <location>
        <begin position="921"/>
        <end position="941"/>
    </location>
</feature>
<feature type="transmembrane region" description="Helical" evidence="4">
    <location>
        <begin position="975"/>
        <end position="997"/>
    </location>
</feature>
<feature type="transmembrane region" description="Helical" evidence="4">
    <location>
        <begin position="1023"/>
        <end position="1044"/>
    </location>
</feature>
<feature type="transmembrane region" description="Helical" evidence="4">
    <location>
        <begin position="1078"/>
        <end position="1123"/>
    </location>
</feature>
<feature type="transmembrane region" description="Helical" evidence="4">
    <location>
        <begin position="1150"/>
        <end position="1186"/>
    </location>
</feature>
<feature type="region of interest" description="Disordered" evidence="5">
    <location>
        <begin position="1"/>
        <end position="256"/>
    </location>
</feature>
<feature type="region of interest" description="Disordered" evidence="5">
    <location>
        <begin position="286"/>
        <end position="312"/>
    </location>
</feature>
<feature type="region of interest" description="Disordered" evidence="5">
    <location>
        <begin position="428"/>
        <end position="497"/>
    </location>
</feature>
<feature type="region of interest" description="Membrane (anion exchange)">
    <location>
        <begin position="708"/>
        <end position="1227"/>
    </location>
</feature>
<feature type="compositionally biased region" description="Pro residues" evidence="5">
    <location>
        <begin position="1"/>
        <end position="11"/>
    </location>
</feature>
<feature type="compositionally biased region" description="Basic and acidic residues" evidence="5">
    <location>
        <begin position="58"/>
        <end position="75"/>
    </location>
</feature>
<feature type="compositionally biased region" description="Basic residues" evidence="5">
    <location>
        <begin position="76"/>
        <end position="97"/>
    </location>
</feature>
<feature type="compositionally biased region" description="Basic residues" evidence="5">
    <location>
        <begin position="104"/>
        <end position="113"/>
    </location>
</feature>
<feature type="compositionally biased region" description="Acidic residues" evidence="5">
    <location>
        <begin position="134"/>
        <end position="152"/>
    </location>
</feature>
<feature type="compositionally biased region" description="Low complexity" evidence="5">
    <location>
        <begin position="194"/>
        <end position="215"/>
    </location>
</feature>
<feature type="compositionally biased region" description="Low complexity" evidence="5">
    <location>
        <begin position="435"/>
        <end position="448"/>
    </location>
</feature>
<feature type="compositionally biased region" description="Basic and acidic residues" evidence="5">
    <location>
        <begin position="480"/>
        <end position="497"/>
    </location>
</feature>
<feature type="modified residue" description="Phosphoserine" evidence="8">
    <location>
        <position position="167"/>
    </location>
</feature>
<feature type="modified residue" description="Phosphoserine" evidence="8">
    <location>
        <position position="170"/>
    </location>
</feature>
<feature type="modified residue" description="Phosphoserine" evidence="2">
    <location>
        <position position="175"/>
    </location>
</feature>
<feature type="modified residue" description="Phosphoserine" evidence="8">
    <location>
        <position position="198"/>
    </location>
</feature>
<feature type="modified residue" description="Omega-N-methylarginine" evidence="9">
    <location>
        <position position="294"/>
    </location>
</feature>
<feature type="lipid moiety-binding region" description="S-palmitoyl cysteine" evidence="1">
    <location>
        <position position="1160"/>
    </location>
</feature>
<feature type="glycosylation site" description="N-linked (GlcNAc...) asparagine" evidence="4">
    <location>
        <position position="868"/>
    </location>
</feature>
<feature type="splice variant" id="VSP_000464" description="In isoform 311-AE3." evidence="7">
    <original>AALLDLEQTTL</original>
    <variation>RAFWAGNESLL</variation>
    <location>
        <begin position="381"/>
        <end position="391"/>
    </location>
</feature>
<feature type="splice variant" id="VSP_000465" description="In isoform 311-AE3." evidence="7">
    <location>
        <begin position="392"/>
        <end position="1227"/>
    </location>
</feature>
<feature type="splice variant" id="VSP_000466" description="In isoform 14-AE3." evidence="7">
    <original>KPLHMPGGDGHRGKSLK</original>
    <variation>FCVLRSPSPCLGETVTEGKA</variation>
    <location>
        <begin position="487"/>
        <end position="503"/>
    </location>
</feature>
<feature type="splice variant" id="VSP_000467" description="In isoform 14-AE3." evidence="7">
    <location>
        <begin position="504"/>
        <end position="1227"/>
    </location>
</feature>
<feature type="sequence conflict" description="In Ref. 1; AAA37184." evidence="7" ref="1">
    <original>A</original>
    <variation>G</variation>
    <location>
        <position position="530"/>
    </location>
</feature>
<feature type="sequence conflict" description="In Ref. 1; AAA37184." evidence="7" ref="1">
    <original>S</original>
    <variation>T</variation>
    <location>
        <position position="812"/>
    </location>
</feature>
<feature type="sequence conflict" description="In Ref. 1; AAA37184." evidence="7" ref="1">
    <original>MH</original>
    <variation>ID</variation>
    <location>
        <begin position="1150"/>
        <end position="1151"/>
    </location>
</feature>
<feature type="sequence conflict" description="In Ref. 1; AAA37184." evidence="7" ref="1">
    <original>RR</original>
    <variation>SG</variation>
    <location>
        <begin position="1187"/>
        <end position="1188"/>
    </location>
</feature>
<name>B3A3_MOUSE</name>
<dbReference type="EMBL" id="M28383">
    <property type="protein sequence ID" value="AAA37184.1"/>
    <property type="molecule type" value="mRNA"/>
</dbReference>
<dbReference type="EMBL" id="S69314">
    <property type="protein sequence ID" value="AAB30140.1"/>
    <property type="molecule type" value="mRNA"/>
</dbReference>
<dbReference type="EMBL" id="AF294651">
    <property type="protein sequence ID" value="AAG25582.1"/>
    <property type="molecule type" value="Genomic_DNA"/>
</dbReference>
<dbReference type="EMBL" id="CH466548">
    <property type="protein sequence ID" value="EDL00426.1"/>
    <property type="molecule type" value="Genomic_DNA"/>
</dbReference>
<dbReference type="CCDS" id="CCDS15080.1">
    <molecule id="P16283-1"/>
</dbReference>
<dbReference type="PIR" id="A33638">
    <property type="entry name" value="A33638"/>
</dbReference>
<dbReference type="RefSeq" id="NP_001344078.1">
    <molecule id="P16283-1"/>
    <property type="nucleotide sequence ID" value="NM_001357149.1"/>
</dbReference>
<dbReference type="RefSeq" id="NP_001344079.1">
    <molecule id="P16283-1"/>
    <property type="nucleotide sequence ID" value="NM_001357150.1"/>
</dbReference>
<dbReference type="RefSeq" id="NP_033234.2">
    <molecule id="P16283-1"/>
    <property type="nucleotide sequence ID" value="NM_009208.3"/>
</dbReference>
<dbReference type="RefSeq" id="XP_006496512.1">
    <property type="nucleotide sequence ID" value="XM_006496449.3"/>
</dbReference>
<dbReference type="RefSeq" id="XP_006496513.1">
    <molecule id="P16283-1"/>
    <property type="nucleotide sequence ID" value="XM_006496450.4"/>
</dbReference>
<dbReference type="RefSeq" id="XP_006496514.1">
    <molecule id="P16283-1"/>
    <property type="nucleotide sequence ID" value="XM_006496451.4"/>
</dbReference>
<dbReference type="RefSeq" id="XP_006496515.1">
    <property type="nucleotide sequence ID" value="XM_006496452.3"/>
</dbReference>
<dbReference type="RefSeq" id="XP_006496516.1">
    <molecule id="P16283-1"/>
    <property type="nucleotide sequence ID" value="XM_006496453.3"/>
</dbReference>
<dbReference type="SMR" id="P16283"/>
<dbReference type="BioGRID" id="203315">
    <property type="interactions" value="1"/>
</dbReference>
<dbReference type="FunCoup" id="P16283">
    <property type="interactions" value="261"/>
</dbReference>
<dbReference type="STRING" id="10090.ENSMUSP00000116747"/>
<dbReference type="GlyCosmos" id="P16283">
    <property type="glycosylation" value="1 site, No reported glycans"/>
</dbReference>
<dbReference type="GlyGen" id="P16283">
    <property type="glycosylation" value="2 sites, 1 N-linked glycan (1 site)"/>
</dbReference>
<dbReference type="iPTMnet" id="P16283"/>
<dbReference type="PhosphoSitePlus" id="P16283"/>
<dbReference type="PaxDb" id="10090-ENSMUSP00000116747"/>
<dbReference type="PeptideAtlas" id="P16283"/>
<dbReference type="ProteomicsDB" id="273521">
    <molecule id="P16283-1"/>
</dbReference>
<dbReference type="ProteomicsDB" id="273522">
    <molecule id="P16283-2"/>
</dbReference>
<dbReference type="ProteomicsDB" id="273523">
    <molecule id="P16283-3"/>
</dbReference>
<dbReference type="Antibodypedia" id="52538">
    <property type="antibodies" value="35 antibodies from 15 providers"/>
</dbReference>
<dbReference type="DNASU" id="20536"/>
<dbReference type="Ensembl" id="ENSMUST00000124341.8">
    <molecule id="P16283-1"/>
    <property type="protein sequence ID" value="ENSMUSP00000116747.2"/>
    <property type="gene ID" value="ENSMUSG00000006576.17"/>
</dbReference>
<dbReference type="GeneID" id="20536"/>
<dbReference type="KEGG" id="mmu:20536"/>
<dbReference type="UCSC" id="uc007bpv.2">
    <molecule id="P16283-1"/>
    <property type="organism name" value="mouse"/>
</dbReference>
<dbReference type="AGR" id="MGI:109350"/>
<dbReference type="CTD" id="6508"/>
<dbReference type="MGI" id="MGI:109350">
    <property type="gene designation" value="Slc4a3"/>
</dbReference>
<dbReference type="VEuPathDB" id="HostDB:ENSMUSG00000006576"/>
<dbReference type="eggNOG" id="KOG1172">
    <property type="taxonomic scope" value="Eukaryota"/>
</dbReference>
<dbReference type="GeneTree" id="ENSGT00940000159765"/>
<dbReference type="HOGENOM" id="CLU_002289_1_0_1"/>
<dbReference type="InParanoid" id="P16283"/>
<dbReference type="OMA" id="CLMNVGC"/>
<dbReference type="OrthoDB" id="1735926at2759"/>
<dbReference type="PhylomeDB" id="P16283"/>
<dbReference type="TreeFam" id="TF313630"/>
<dbReference type="Reactome" id="R-MMU-425381">
    <property type="pathway name" value="Bicarbonate transporters"/>
</dbReference>
<dbReference type="BioGRID-ORCS" id="20536">
    <property type="hits" value="3 hits in 76 CRISPR screens"/>
</dbReference>
<dbReference type="ChiTaRS" id="Slc4a3">
    <property type="organism name" value="mouse"/>
</dbReference>
<dbReference type="PRO" id="PR:P16283"/>
<dbReference type="Proteomes" id="UP000000589">
    <property type="component" value="Chromosome 1"/>
</dbReference>
<dbReference type="RNAct" id="P16283">
    <property type="molecule type" value="protein"/>
</dbReference>
<dbReference type="Bgee" id="ENSMUSG00000006576">
    <property type="expression patterns" value="Expressed in perirhinal cortex and 227 other cell types or tissues"/>
</dbReference>
<dbReference type="ExpressionAtlas" id="P16283">
    <property type="expression patterns" value="baseline and differential"/>
</dbReference>
<dbReference type="GO" id="GO:0009897">
    <property type="term" value="C:external side of plasma membrane"/>
    <property type="evidence" value="ECO:0007669"/>
    <property type="project" value="Ensembl"/>
</dbReference>
<dbReference type="GO" id="GO:0005886">
    <property type="term" value="C:plasma membrane"/>
    <property type="evidence" value="ECO:0000314"/>
    <property type="project" value="MGI"/>
</dbReference>
<dbReference type="GO" id="GO:0022853">
    <property type="term" value="F:active monoatomic ion transmembrane transporter activity"/>
    <property type="evidence" value="ECO:0007669"/>
    <property type="project" value="UniProtKB-ARBA"/>
</dbReference>
<dbReference type="GO" id="GO:0140900">
    <property type="term" value="F:chloride:bicarbonate antiporter activity"/>
    <property type="evidence" value="ECO:0000314"/>
    <property type="project" value="UniProtKB"/>
</dbReference>
<dbReference type="GO" id="GO:0061337">
    <property type="term" value="P:cardiac conduction"/>
    <property type="evidence" value="ECO:0007669"/>
    <property type="project" value="Ensembl"/>
</dbReference>
<dbReference type="GO" id="GO:0045851">
    <property type="term" value="P:pH reduction"/>
    <property type="evidence" value="ECO:0000250"/>
    <property type="project" value="UniProtKB"/>
</dbReference>
<dbReference type="GO" id="GO:0098901">
    <property type="term" value="P:regulation of cardiac muscle cell action potential"/>
    <property type="evidence" value="ECO:0000250"/>
    <property type="project" value="UniProtKB"/>
</dbReference>
<dbReference type="GO" id="GO:0051453">
    <property type="term" value="P:regulation of intracellular pH"/>
    <property type="evidence" value="ECO:0000314"/>
    <property type="project" value="MGI"/>
</dbReference>
<dbReference type="FunFam" id="1.10.287.570:FF:000001">
    <property type="entry name" value="Anion exchange protein"/>
    <property type="match status" value="1"/>
</dbReference>
<dbReference type="FunFam" id="3.40.930.10:FF:000004">
    <property type="entry name" value="Anion exchange protein"/>
    <property type="match status" value="1"/>
</dbReference>
<dbReference type="Gene3D" id="1.10.287.570">
    <property type="entry name" value="Helical hairpin bin"/>
    <property type="match status" value="1"/>
</dbReference>
<dbReference type="Gene3D" id="3.40.930.10">
    <property type="entry name" value="Mannitol-specific EII, Chain A"/>
    <property type="match status" value="1"/>
</dbReference>
<dbReference type="InterPro" id="IPR001717">
    <property type="entry name" value="Anion_exchange"/>
</dbReference>
<dbReference type="InterPro" id="IPR002979">
    <property type="entry name" value="Anion_exchange_3"/>
</dbReference>
<dbReference type="InterPro" id="IPR018241">
    <property type="entry name" value="Anion_exchange_CS"/>
</dbReference>
<dbReference type="InterPro" id="IPR013769">
    <property type="entry name" value="Band3_cytoplasmic_dom"/>
</dbReference>
<dbReference type="InterPro" id="IPR011531">
    <property type="entry name" value="HCO3_transpt-like_TM_dom"/>
</dbReference>
<dbReference type="InterPro" id="IPR003020">
    <property type="entry name" value="HCO3_transpt_euk"/>
</dbReference>
<dbReference type="InterPro" id="IPR016152">
    <property type="entry name" value="PTrfase/Anion_transptr"/>
</dbReference>
<dbReference type="NCBIfam" id="TIGR00834">
    <property type="entry name" value="ae"/>
    <property type="match status" value="1"/>
</dbReference>
<dbReference type="PANTHER" id="PTHR11453">
    <property type="entry name" value="ANION EXCHANGE PROTEIN"/>
    <property type="match status" value="1"/>
</dbReference>
<dbReference type="PANTHER" id="PTHR11453:SF15">
    <property type="entry name" value="ANION EXCHANGE PROTEIN 3"/>
    <property type="match status" value="1"/>
</dbReference>
<dbReference type="Pfam" id="PF07565">
    <property type="entry name" value="Band_3_cyto"/>
    <property type="match status" value="1"/>
</dbReference>
<dbReference type="Pfam" id="PF00955">
    <property type="entry name" value="HCO3_cotransp"/>
    <property type="match status" value="1"/>
</dbReference>
<dbReference type="PRINTS" id="PR00165">
    <property type="entry name" value="ANIONEXCHNGR"/>
</dbReference>
<dbReference type="PRINTS" id="PR01189">
    <property type="entry name" value="ANIONEXHNGR3"/>
</dbReference>
<dbReference type="PRINTS" id="PR01231">
    <property type="entry name" value="HCO3TRNSPORT"/>
</dbReference>
<dbReference type="SUPFAM" id="SSF55804">
    <property type="entry name" value="Phoshotransferase/anion transport protein"/>
    <property type="match status" value="1"/>
</dbReference>
<dbReference type="PROSITE" id="PS00219">
    <property type="entry name" value="ANION_EXCHANGER_1"/>
    <property type="match status" value="1"/>
</dbReference>
<dbReference type="PROSITE" id="PS00220">
    <property type="entry name" value="ANION_EXCHANGER_2"/>
    <property type="match status" value="1"/>
</dbReference>
<protein>
    <recommendedName>
        <fullName>Anion exchange protein 3</fullName>
        <shortName>AE 3</shortName>
        <shortName>Anion exchanger 3</shortName>
    </recommendedName>
    <alternativeName>
        <fullName>Neuronal band 3-like protein</fullName>
    </alternativeName>
    <alternativeName>
        <fullName>Solute carrier family 4 member 3</fullName>
    </alternativeName>
</protein>
<evidence type="ECO:0000250" key="1"/>
<evidence type="ECO:0000250" key="2">
    <source>
        <dbReference type="UniProtKB" id="P23348"/>
    </source>
</evidence>
<evidence type="ECO:0000250" key="3">
    <source>
        <dbReference type="UniProtKB" id="P48751"/>
    </source>
</evidence>
<evidence type="ECO:0000255" key="4"/>
<evidence type="ECO:0000256" key="5">
    <source>
        <dbReference type="SAM" id="MobiDB-lite"/>
    </source>
</evidence>
<evidence type="ECO:0000269" key="6">
    <source>
    </source>
</evidence>
<evidence type="ECO:0000305" key="7"/>
<evidence type="ECO:0007744" key="8">
    <source>
    </source>
</evidence>
<evidence type="ECO:0007744" key="9">
    <source>
    </source>
</evidence>
<comment type="function">
    <text evidence="3 6">Sodium-independent anion exchanger which mediates the electroneutral exchange of chloride for bicarbonate ions across the cell membrane. May be involved in the regulation of intracellular pH, and the modulation of cardiac action potential (By similarity).</text>
</comment>
<comment type="catalytic activity">
    <reaction evidence="6">
        <text>hydrogencarbonate(in) + chloride(out) = hydrogencarbonate(out) + chloride(in)</text>
        <dbReference type="Rhea" id="RHEA:72363"/>
        <dbReference type="ChEBI" id="CHEBI:17544"/>
        <dbReference type="ChEBI" id="CHEBI:17996"/>
    </reaction>
</comment>
<comment type="activity regulation">
    <text evidence="6">Inhibited by 4,4'-diisothiocyanatostilbene-2,2'-disulfonic acid (DIDS).</text>
</comment>
<comment type="subcellular location">
    <subcellularLocation>
        <location evidence="6">Cell membrane</location>
        <topology evidence="4">Multi-pass membrane protein</topology>
    </subcellularLocation>
</comment>
<comment type="alternative products">
    <event type="alternative splicing"/>
    <isoform>
        <id>P16283-1</id>
        <name>FL-AE3</name>
        <sequence type="displayed"/>
    </isoform>
    <isoform>
        <id>P16283-2</id>
        <name>311-AE3</name>
        <sequence type="described" ref="VSP_000464 VSP_000465"/>
    </isoform>
    <isoform>
        <id>P16283-3</id>
        <name>14-AE3</name>
        <sequence type="described" ref="VSP_000466 VSP_000467"/>
    </isoform>
</comment>
<comment type="tissue specificity">
    <text evidence="6">Expressed in the brain.</text>
</comment>
<comment type="similarity">
    <text evidence="7">Belongs to the anion exchanger (TC 2.A.31) family.</text>
</comment>
<accession>P16283</accession>
<accession>Q9ERP5</accession>
<proteinExistence type="evidence at protein level"/>
<reference key="1">
    <citation type="journal article" date="1989" name="Cell">
        <title>Regulation of intracellular pH by a neuronal homolog of the erythrocyte anion exchanger.</title>
        <authorList>
            <person name="Kopito R.R."/>
            <person name="Lee B.S."/>
            <person name="Simmons D.M."/>
            <person name="Lindsey A.E."/>
            <person name="Morgans C.W."/>
            <person name="Schneider K."/>
        </authorList>
    </citation>
    <scope>NUCLEOTIDE SEQUENCE [MRNA]</scope>
    <scope>FUNCTION</scope>
    <scope>TRANSPORTER ACTIVITY</scope>
    <scope>ACTIVITY REGULATION</scope>
    <scope>SUBCELLULAR LOCATION</scope>
    <scope>TISSUE SPECIFICITY</scope>
</reference>
<reference key="2">
    <citation type="journal article" date="1993" name="J. Cell Sci.">
        <title>Generation of truncated brain AE3 isoforms by alternate mRNA processing.</title>
        <authorList>
            <person name="Morgans C.W."/>
            <person name="Kopito R.R."/>
        </authorList>
    </citation>
    <scope>NUCLEOTIDE SEQUENCE [MRNA]</scope>
    <scope>ALTERNATIVE SPLICING</scope>
</reference>
<reference key="3">
    <citation type="journal article" date="2002" name="DNA Seq.">
        <title>Genomic cloning and promoter analysis of a mouse anion exchanger 3 (AE3) gene.</title>
        <authorList>
            <person name="Iwaasa M."/>
            <person name="Tatewaki H."/>
            <person name="Ohno T."/>
            <person name="Okubo K."/>
            <person name="Hamasaki N."/>
            <person name="Kang D."/>
        </authorList>
    </citation>
    <scope>NUCLEOTIDE SEQUENCE [GENOMIC DNA]</scope>
    <source>
        <strain>129/Sv</strain>
    </source>
</reference>
<reference key="4">
    <citation type="submission" date="2005-07" db="EMBL/GenBank/DDBJ databases">
        <authorList>
            <person name="Mural R.J."/>
            <person name="Adams M.D."/>
            <person name="Myers E.W."/>
            <person name="Smith H.O."/>
            <person name="Venter J.C."/>
        </authorList>
    </citation>
    <scope>NUCLEOTIDE SEQUENCE [LARGE SCALE GENOMIC DNA]</scope>
</reference>
<reference key="5">
    <citation type="journal article" date="2007" name="Mol. Cell. Proteomics">
        <title>Qualitative and quantitative analyses of protein phosphorylation in naive and stimulated mouse synaptosomal preparations.</title>
        <authorList>
            <person name="Munton R.P."/>
            <person name="Tweedie-Cullen R."/>
            <person name="Livingstone-Zatchej M."/>
            <person name="Weinandy F."/>
            <person name="Waidelich M."/>
            <person name="Longo D."/>
            <person name="Gehrig P."/>
            <person name="Potthast F."/>
            <person name="Rutishauser D."/>
            <person name="Gerrits B."/>
            <person name="Panse C."/>
            <person name="Schlapbach R."/>
            <person name="Mansuy I.M."/>
        </authorList>
    </citation>
    <scope>IDENTIFICATION BY MASS SPECTROMETRY [LARGE SCALE ANALYSIS]</scope>
    <source>
        <tissue>Brain cortex</tissue>
    </source>
</reference>
<reference key="6">
    <citation type="journal article" date="2010" name="Cell">
        <title>A tissue-specific atlas of mouse protein phosphorylation and expression.</title>
        <authorList>
            <person name="Huttlin E.L."/>
            <person name="Jedrychowski M.P."/>
            <person name="Elias J.E."/>
            <person name="Goswami T."/>
            <person name="Rad R."/>
            <person name="Beausoleil S.A."/>
            <person name="Villen J."/>
            <person name="Haas W."/>
            <person name="Sowa M.E."/>
            <person name="Gygi S.P."/>
        </authorList>
    </citation>
    <scope>PHOSPHORYLATION [LARGE SCALE ANALYSIS] AT SER-167; SER-170 AND SER-198</scope>
    <scope>IDENTIFICATION BY MASS SPECTROMETRY [LARGE SCALE ANALYSIS]</scope>
    <source>
        <tissue>Brain</tissue>
        <tissue>Heart</tissue>
    </source>
</reference>
<reference key="7">
    <citation type="journal article" date="2014" name="Mol. Cell. Proteomics">
        <title>Immunoaffinity enrichment and mass spectrometry analysis of protein methylation.</title>
        <authorList>
            <person name="Guo A."/>
            <person name="Gu H."/>
            <person name="Zhou J."/>
            <person name="Mulhern D."/>
            <person name="Wang Y."/>
            <person name="Lee K.A."/>
            <person name="Yang V."/>
            <person name="Aguiar M."/>
            <person name="Kornhauser J."/>
            <person name="Jia X."/>
            <person name="Ren J."/>
            <person name="Beausoleil S.A."/>
            <person name="Silva J.C."/>
            <person name="Vemulapalli V."/>
            <person name="Bedford M.T."/>
            <person name="Comb M.J."/>
        </authorList>
    </citation>
    <scope>METHYLATION [LARGE SCALE ANALYSIS] AT ARG-294</scope>
    <scope>IDENTIFICATION BY MASS SPECTROMETRY [LARGE SCALE ANALYSIS]</scope>
    <source>
        <tissue>Brain</tissue>
    </source>
</reference>
<keyword id="KW-0025">Alternative splicing</keyword>
<keyword id="KW-0039">Anion exchange</keyword>
<keyword id="KW-0050">Antiport</keyword>
<keyword id="KW-1003">Cell membrane</keyword>
<keyword id="KW-0325">Glycoprotein</keyword>
<keyword id="KW-0406">Ion transport</keyword>
<keyword id="KW-0449">Lipoprotein</keyword>
<keyword id="KW-0472">Membrane</keyword>
<keyword id="KW-0488">Methylation</keyword>
<keyword id="KW-0564">Palmitate</keyword>
<keyword id="KW-0597">Phosphoprotein</keyword>
<keyword id="KW-1185">Reference proteome</keyword>
<keyword id="KW-0812">Transmembrane</keyword>
<keyword id="KW-1133">Transmembrane helix</keyword>
<keyword id="KW-0813">Transport</keyword>
<organism>
    <name type="scientific">Mus musculus</name>
    <name type="common">Mouse</name>
    <dbReference type="NCBI Taxonomy" id="10090"/>
    <lineage>
        <taxon>Eukaryota</taxon>
        <taxon>Metazoa</taxon>
        <taxon>Chordata</taxon>
        <taxon>Craniata</taxon>
        <taxon>Vertebrata</taxon>
        <taxon>Euteleostomi</taxon>
        <taxon>Mammalia</taxon>
        <taxon>Eutheria</taxon>
        <taxon>Euarchontoglires</taxon>
        <taxon>Glires</taxon>
        <taxon>Rodentia</taxon>
        <taxon>Myomorpha</taxon>
        <taxon>Muroidea</taxon>
        <taxon>Muridae</taxon>
        <taxon>Murinae</taxon>
        <taxon>Mus</taxon>
        <taxon>Mus</taxon>
    </lineage>
</organism>
<sequence>MANGVIPPPGGASPLPQVRVPLEEPPLGPDVEEEDDDLGKTLAVSRFGDLISKTPAWDPEKPSRSYSERDFEFHRHTSHHTHHPLSARLPPPHKLRRPPPTSARHTRRKRKKEKTSAPPSEGTPPIQEEGGAGAEEEEEEEEEEEGESEAEPVEPLPPGPPQKAKFSIGSDEDDSPGLPVKAPCAKALPSVGLQSDQSPQRSGSSPSPRARASRISTEKSRPWSPSASYDLRERLCPGSALGNPGPEQRVPTDEAEAQMLGSADLDDMKSHRLEDNPGVRRHLVKKPSRIQGGRGSPSGLAPILRRKKKKKKLDRRPHEVFVELNELMLDRSQEPHWRETARWIKFEEDVEEETERWGKPHVASLSFRSLLELRRTIAQGAALLDLEQTTLPGIAHLVVETMIVSDQIRPEDRASVLRTLLLKHSHPNDDKDSGFFPRNPSSSSVNSVLGNHHPTPSHGPDGAVPTMADDQGEPAPLWPHDPDAKEKPLHMPGGDGHRGKSLKLLEKIPEDAEATVVLVGCVPFLEQPAAAFVRLSEAVLLESVLEVPVPVRFLFVMLGPSHTSTDYHELGRSIATLMSDKLFHEAAYQADDRQDLLGAISEFLDGSIVIPPSEVEGRDLLRSVAAFQRELLRKRREREQTKVEMTTRGGYAAPGKELSLEMGGSEATSEDDPLQRTGSVFGGLVRDVKRRYPHYPSDLRDALHSQCVAAVLFIYFAALSPAITFGGLLGEKTEGLMGVSELIVSTAVLGVLFSLLGAQPLLVVGFSGPLLVFEEAFFKFCRAQDLEYLTGRVWVGLWLVVFVLALVAAEGSFLVRYISPFTQEIFAFLISLIFIYETFHKLYKVFTEHPLLPFYPPDEALETGLELNSSALPPTEGPPGPRNQPNTALLSLILMLGTFLIAFFLRKFRNSRFLGGKARRIIGDFGIPISILVMVLVDYSITDTYTQKLTVPTGLSVTSPHKRTWFIPPLGSARPFPPWMMVAAAVPALLVLILIFMETQITALIVSQKARRLLKGSGFHLDLLLIGSLGGLCGLFGLPWLTAATVRSVTHVNALTVMRTAIAPGDKPQIQEVREQRVTGVLIASLVGLSIVMGAVLRRIPLAVLFGIFLYMGVTSLSGIQLSQRLLLIFMPAKHHPEQPYVTKVKTWRMHLFTCIQLGCIALLWVVKSTAASLAFPFLLLLTVPLRRCLLPRLFQDRELQALDSEDAEPNFDEDGQDEYNELHMPV</sequence>